<organism>
    <name type="scientific">Sarocladium schorii</name>
    <name type="common">Acremonium strictum (strain IMI 501407)</name>
    <dbReference type="NCBI Taxonomy" id="2203296"/>
    <lineage>
        <taxon>Eukaryota</taxon>
        <taxon>Fungi</taxon>
        <taxon>Dikarya</taxon>
        <taxon>Ascomycota</taxon>
        <taxon>Pezizomycotina</taxon>
        <taxon>Sordariomycetes</taxon>
        <taxon>Hypocreomycetidae</taxon>
        <taxon>Hypocreales</taxon>
        <taxon>Sarocladiaceae</taxon>
        <taxon>Sarocladium</taxon>
    </lineage>
</organism>
<keyword id="KW-0274">FAD</keyword>
<keyword id="KW-0285">Flavoprotein</keyword>
<keyword id="KW-0325">Glycoprotein</keyword>
<keyword id="KW-0472">Membrane</keyword>
<keyword id="KW-0503">Monooxygenase</keyword>
<keyword id="KW-0560">Oxidoreductase</keyword>
<keyword id="KW-0812">Transmembrane</keyword>
<keyword id="KW-1133">Transmembrane helix</keyword>
<evidence type="ECO:0000250" key="1">
    <source>
        <dbReference type="UniProtKB" id="A6T923"/>
    </source>
</evidence>
<evidence type="ECO:0000250" key="2">
    <source>
        <dbReference type="UniProtKB" id="B8M9J8"/>
    </source>
</evidence>
<evidence type="ECO:0000255" key="3"/>
<evidence type="ECO:0000255" key="4">
    <source>
        <dbReference type="PROSITE-ProRule" id="PRU00498"/>
    </source>
</evidence>
<evidence type="ECO:0000269" key="5">
    <source>
    </source>
</evidence>
<evidence type="ECO:0000269" key="6">
    <source>
    </source>
</evidence>
<evidence type="ECO:0000269" key="7">
    <source>
    </source>
</evidence>
<evidence type="ECO:0000269" key="8">
    <source>
    </source>
</evidence>
<evidence type="ECO:0000303" key="9">
    <source>
    </source>
</evidence>
<evidence type="ECO:0000305" key="10"/>
<gene>
    <name evidence="9" type="primary">asL1</name>
</gene>
<reference key="1">
    <citation type="journal article" date="2018" name="Nat. Commun.">
        <title>Three previously unrecognised classes of biosynthetic enzymes revealed during the production of xenovulene A.</title>
        <authorList>
            <person name="Schor R."/>
            <person name="Schotte C."/>
            <person name="Wibberg D."/>
            <person name="Kalinowski J."/>
            <person name="Cox R.J."/>
        </authorList>
    </citation>
    <scope>NUCLEOTIDE SEQUENCE [GENOMIC DNA]</scope>
    <scope>INDUCTION</scope>
    <scope>FUNCTION</scope>
    <scope>CATALYTIC ACTIVITY</scope>
    <scope>PATHWAY</scope>
</reference>
<reference key="2">
    <citation type="journal article" date="1997" name="J. Pharmacol. Exp. Ther.">
        <title>Regulation of neuronal and recombinant GABA(A) receptor ion channels by xenovulene A, a natural product isolated from Acremonium strictum.</title>
        <authorList>
            <person name="Thomas P."/>
            <person name="Sundaram H."/>
            <person name="Krishek B.J."/>
            <person name="Chazot P."/>
            <person name="Xie X."/>
            <person name="Bevan P."/>
            <person name="Brocchini S.J."/>
            <person name="Latham C.J."/>
            <person name="Charlton P."/>
            <person name="Moore M."/>
            <person name="Lewis S.J."/>
            <person name="Thornton D.M."/>
            <person name="Stephenson F.A."/>
            <person name="Smart T.G."/>
        </authorList>
    </citation>
    <scope>BIOTECHNOLOGY</scope>
</reference>
<reference key="3">
    <citation type="journal article" date="2007" name="Chem. Commun. (Camb.)">
        <title>Characterisation of 3-methylorcinaldehyde synthase (MOS) in Acremonium strictum: first observation of a reductive release mechanism during polyketide biosynthesis.</title>
        <authorList>
            <person name="Bailey A.M."/>
            <person name="Cox R.J."/>
            <person name="Harley K."/>
            <person name="Lazarus C.M."/>
            <person name="Simpson T.J."/>
            <person name="Skellam E."/>
        </authorList>
    </citation>
    <scope>FUNCTION</scope>
</reference>
<reference key="4">
    <citation type="journal article" date="2010" name="Chem. Commun. (Camb.)">
        <title>Catalytic role of the C-terminal domains of a fungal non-reducing polyketide synthase.</title>
        <authorList>
            <person name="Fisch K.M."/>
            <person name="Skellam E."/>
            <person name="Ivison D."/>
            <person name="Cox R.J."/>
            <person name="Bailey A.M."/>
            <person name="Lazarus C.M."/>
            <person name="Simpson T.J."/>
        </authorList>
    </citation>
    <scope>FUNCTION</scope>
</reference>
<dbReference type="EC" id="1.-.-.-" evidence="7"/>
<dbReference type="EMBL" id="MG736817">
    <property type="protein sequence ID" value="AWM95796.1"/>
    <property type="molecule type" value="Genomic_DNA"/>
</dbReference>
<dbReference type="SMR" id="A0A2U8U2L6"/>
<dbReference type="GlyCosmos" id="A0A2U8U2L6">
    <property type="glycosylation" value="5 sites, No reported glycans"/>
</dbReference>
<dbReference type="UniPathway" id="UPA00213"/>
<dbReference type="GO" id="GO:0016020">
    <property type="term" value="C:membrane"/>
    <property type="evidence" value="ECO:0007669"/>
    <property type="project" value="UniProtKB-SubCell"/>
</dbReference>
<dbReference type="GO" id="GO:0071949">
    <property type="term" value="F:FAD binding"/>
    <property type="evidence" value="ECO:0007669"/>
    <property type="project" value="InterPro"/>
</dbReference>
<dbReference type="GO" id="GO:0004497">
    <property type="term" value="F:monooxygenase activity"/>
    <property type="evidence" value="ECO:0007669"/>
    <property type="project" value="UniProtKB-KW"/>
</dbReference>
<dbReference type="GO" id="GO:0044550">
    <property type="term" value="P:secondary metabolite biosynthetic process"/>
    <property type="evidence" value="ECO:0007669"/>
    <property type="project" value="TreeGrafter"/>
</dbReference>
<dbReference type="GO" id="GO:0016114">
    <property type="term" value="P:terpenoid biosynthetic process"/>
    <property type="evidence" value="ECO:0007669"/>
    <property type="project" value="UniProtKB-UniPathway"/>
</dbReference>
<dbReference type="FunFam" id="3.50.50.60:FF:000153">
    <property type="entry name" value="Salicylate hydroxylase, putative"/>
    <property type="match status" value="1"/>
</dbReference>
<dbReference type="Gene3D" id="3.50.50.60">
    <property type="entry name" value="FAD/NAD(P)-binding domain"/>
    <property type="match status" value="1"/>
</dbReference>
<dbReference type="InterPro" id="IPR002938">
    <property type="entry name" value="FAD-bd"/>
</dbReference>
<dbReference type="InterPro" id="IPR036188">
    <property type="entry name" value="FAD/NAD-bd_sf"/>
</dbReference>
<dbReference type="InterPro" id="IPR051104">
    <property type="entry name" value="FAD_monoxygenase"/>
</dbReference>
<dbReference type="PANTHER" id="PTHR46720:SF3">
    <property type="entry name" value="FAD-BINDING DOMAIN-CONTAINING PROTEIN-RELATED"/>
    <property type="match status" value="1"/>
</dbReference>
<dbReference type="PANTHER" id="PTHR46720">
    <property type="entry name" value="HYDROXYLASE, PUTATIVE (AFU_ORTHOLOGUE AFUA_3G01460)-RELATED"/>
    <property type="match status" value="1"/>
</dbReference>
<dbReference type="Pfam" id="PF01494">
    <property type="entry name" value="FAD_binding_3"/>
    <property type="match status" value="1"/>
</dbReference>
<dbReference type="PRINTS" id="PR00420">
    <property type="entry name" value="RNGMNOXGNASE"/>
</dbReference>
<dbReference type="SUPFAM" id="SSF54373">
    <property type="entry name" value="FAD-linked reductases, C-terminal domain"/>
    <property type="match status" value="1"/>
</dbReference>
<dbReference type="SUPFAM" id="SSF51905">
    <property type="entry name" value="FAD/NAD(P)-binding domain"/>
    <property type="match status" value="1"/>
</dbReference>
<accession>A0A2U8U2L6</accession>
<name>ASL1_SARSH</name>
<feature type="chain" id="PRO_0000449178" description="Salicylate hydroxylase asL1">
    <location>
        <begin position="1"/>
        <end position="480"/>
    </location>
</feature>
<feature type="transmembrane region" description="Helical" evidence="3">
    <location>
        <begin position="17"/>
        <end position="37"/>
    </location>
</feature>
<feature type="active site" evidence="2">
    <location>
        <position position="213"/>
    </location>
</feature>
<feature type="active site" evidence="2">
    <location>
        <position position="246"/>
    </location>
</feature>
<feature type="binding site" evidence="2">
    <location>
        <position position="47"/>
    </location>
    <ligand>
        <name>FAD</name>
        <dbReference type="ChEBI" id="CHEBI:57692"/>
    </ligand>
</feature>
<feature type="binding site" evidence="2">
    <location>
        <position position="60"/>
    </location>
    <ligand>
        <name>FAD</name>
        <dbReference type="ChEBI" id="CHEBI:57692"/>
    </ligand>
</feature>
<feature type="binding site" evidence="2">
    <location>
        <position position="131"/>
    </location>
    <ligand>
        <name>FAD</name>
        <dbReference type="ChEBI" id="CHEBI:57692"/>
    </ligand>
</feature>
<feature type="binding site" evidence="2">
    <location>
        <position position="329"/>
    </location>
    <ligand>
        <name>FAD</name>
        <dbReference type="ChEBI" id="CHEBI:57692"/>
    </ligand>
</feature>
<feature type="binding site" evidence="2">
    <location>
        <position position="342"/>
    </location>
    <ligand>
        <name>FAD</name>
        <dbReference type="ChEBI" id="CHEBI:57692"/>
    </ligand>
</feature>
<feature type="glycosylation site" description="N-linked (GlcNAc...) asparagine" evidence="4">
    <location>
        <position position="87"/>
    </location>
</feature>
<feature type="glycosylation site" description="N-linked (GlcNAc...) asparagine" evidence="4">
    <location>
        <position position="168"/>
    </location>
</feature>
<feature type="glycosylation site" description="N-linked (GlcNAc...) asparagine" evidence="4">
    <location>
        <position position="250"/>
    </location>
</feature>
<feature type="glycosylation site" description="N-linked (GlcNAc...) asparagine" evidence="4">
    <location>
        <position position="400"/>
    </location>
</feature>
<feature type="glycosylation site" description="N-linked (GlcNAc...) asparagine" evidence="4">
    <location>
        <position position="464"/>
    </location>
</feature>
<protein>
    <recommendedName>
        <fullName evidence="9">Salicylate hydroxylase asL1</fullName>
        <ecNumber evidence="7">1.-.-.-</ecNumber>
    </recommendedName>
    <alternativeName>
        <fullName evidence="9">FAD-dependent monooxygenase asL1</fullName>
    </alternativeName>
    <alternativeName>
        <fullName evidence="9">Xenovulene A biosynthesis cluster protein L1</fullName>
    </alternativeName>
</protein>
<proteinExistence type="evidence at protein level"/>
<sequence>MDSPEVYEVVDASPEKPMEIAIVGGGIVGVILAIGLTRQNIKVRVFEQAASFREIGAGMAFNACARNCMDLIDPVITQALLRCGAVNMSDVDAEDDYLRWIDGYNQHRPEDPSYQRPLSEIGGAGFRGCRRDQFLEELAKEVPQGAVEFRKRLASLEDNTDNGPVVLNFTDGTRAEVDAVIGCDGIKSVVRKQMFGTNHPASNAQYTHKVAYRGLVPMNRAVEVLGPWKAGNFHHHVGPGAHLTHYPVANNTVLNVVAFLSDPNPWPDNQRMEMEGSREDVLTGLKGWHPTVLNLVNLLPEKLSKWALFDLCEFPAPSYSAGRVCIAGDAAHASSPHHGASACLGVEDCLCLNVLLAQVRETVAANQDPAKNRLALSRAIETAFKTFDTVRHKRTQWLVNSSRRVCDLYHQPEWADPTRWAKAETCFEEIRDRSYKIWYFDVDGMVKQTRDEYELRQHGEKLGNGTNGVFSDERHGGYTL</sequence>
<comment type="function">
    <text evidence="5 6 7">Salicylate hydroxylase; part of the gene cluster that mediates the biosynthesis of xenovulene A, an unusual meroterpenoid that has potent inhibitory effects on the human gamma-aminobutyrate A (GABAA) benzodiazepine receptor (PubMed:29773797). The first step of xenovulene A biosynthesis is the biosynthesis of 3-methylorcinaldehyde performed by the non-reducing polyketide synthase aspks1 (PubMed:17912413, PubMed:20552126, PubMed:29773797). The salicylate hydroxylase asL1 then catalyzes the oxidative dearomatization of 3-methylorcinaldehyde to yield a dearomatized hydroxycyclohexadione (PubMed:29773797). The 2-oxoglutarate-dependent dioxygenase asL3 further catalyzes the oxidative ring expansion to provide the first tropolone metabolite (PubMed:29773797). The cytochrome P450 monooxygenase asR2 allows the synthesis of tropolone hemiacetal (PubMed:29773797). In parallel, a previously unrecognised class of terpene cyclase, asR6, produces alpha-humulene from farnesylpyrophosphate (FPP) (PubMed:29773797). The putative Diels-Alderase asR5 probably catalyzes the formation of the tropolone-humulene skeleton by linking humulene and the polyketide moiety (PubMed:29773797). Oxidative-ring contractions catalyzed by asL4 and asL6 then processively remove carbon atoms from the polyketide to yield xenovulene A (PubMed:29773797).</text>
</comment>
<comment type="cofactor">
    <cofactor evidence="1">
        <name>FAD</name>
        <dbReference type="ChEBI" id="CHEBI:57692"/>
    </cofactor>
</comment>
<comment type="pathway">
    <text evidence="7">Secondary metabolite biosynthesis; terpenoid biosynthesis.</text>
</comment>
<comment type="subcellular location">
    <subcellularLocation>
        <location evidence="3">Membrane</location>
        <topology evidence="3">Single-pass membrane protein</topology>
    </subcellularLocation>
</comment>
<comment type="induction">
    <text evidence="7">Expression is significantly up-regulated under xenovulene A producing condition.</text>
</comment>
<comment type="biotechnology">
    <text evidence="8">Xenovulene A is a natural product exhibiting little structural resemblance with classical benzodiazepines yet is able to displace high-affinity ligand binding to the benzodiazepine site of the gamma-aminobutyrate A (GABAA) receptor and could be potentially used as an anti-depressant with reduced addictive properties.</text>
</comment>
<comment type="similarity">
    <text evidence="10">Belongs to the paxM FAD-dependent monooxygenase family.</text>
</comment>